<gene>
    <name evidence="1" type="primary">thiG</name>
    <name type="ordered locus">MSMEG_0793</name>
    <name type="ordered locus">MSMEI_0777</name>
</gene>
<organism>
    <name type="scientific">Mycolicibacterium smegmatis (strain ATCC 700084 / mc(2)155)</name>
    <name type="common">Mycobacterium smegmatis</name>
    <dbReference type="NCBI Taxonomy" id="246196"/>
    <lineage>
        <taxon>Bacteria</taxon>
        <taxon>Bacillati</taxon>
        <taxon>Actinomycetota</taxon>
        <taxon>Actinomycetes</taxon>
        <taxon>Mycobacteriales</taxon>
        <taxon>Mycobacteriaceae</taxon>
        <taxon>Mycolicibacterium</taxon>
    </lineage>
</organism>
<proteinExistence type="evidence at protein level"/>
<protein>
    <recommendedName>
        <fullName evidence="1">Thiazole synthase</fullName>
        <ecNumber evidence="1">2.8.1.10</ecNumber>
    </recommendedName>
</protein>
<dbReference type="EC" id="2.8.1.10" evidence="1"/>
<dbReference type="EMBL" id="CP000480">
    <property type="protein sequence ID" value="ABK71483.1"/>
    <property type="molecule type" value="Genomic_DNA"/>
</dbReference>
<dbReference type="EMBL" id="CP001663">
    <property type="protein sequence ID" value="AFP37257.1"/>
    <property type="molecule type" value="Genomic_DNA"/>
</dbReference>
<dbReference type="RefSeq" id="WP_011727197.1">
    <property type="nucleotide sequence ID" value="NZ_SIJM01000036.1"/>
</dbReference>
<dbReference type="RefSeq" id="YP_885198.1">
    <property type="nucleotide sequence ID" value="NC_008596.1"/>
</dbReference>
<dbReference type="SMR" id="A0QQL0"/>
<dbReference type="STRING" id="246196.MSMEG_0793"/>
<dbReference type="PaxDb" id="246196-MSMEI_0777"/>
<dbReference type="KEGG" id="msb:LJ00_03940"/>
<dbReference type="KEGG" id="msg:MSMEI_0777"/>
<dbReference type="KEGG" id="msm:MSMEG_0793"/>
<dbReference type="PATRIC" id="fig|246196.19.peg.788"/>
<dbReference type="eggNOG" id="COG2022">
    <property type="taxonomic scope" value="Bacteria"/>
</dbReference>
<dbReference type="OrthoDB" id="9805935at2"/>
<dbReference type="UniPathway" id="UPA00060"/>
<dbReference type="Proteomes" id="UP000000757">
    <property type="component" value="Chromosome"/>
</dbReference>
<dbReference type="Proteomes" id="UP000006158">
    <property type="component" value="Chromosome"/>
</dbReference>
<dbReference type="GO" id="GO:0005737">
    <property type="term" value="C:cytoplasm"/>
    <property type="evidence" value="ECO:0007669"/>
    <property type="project" value="UniProtKB-SubCell"/>
</dbReference>
<dbReference type="GO" id="GO:1990107">
    <property type="term" value="F:thiazole synthase activity"/>
    <property type="evidence" value="ECO:0007669"/>
    <property type="project" value="UniProtKB-EC"/>
</dbReference>
<dbReference type="GO" id="GO:0009229">
    <property type="term" value="P:thiamine diphosphate biosynthetic process"/>
    <property type="evidence" value="ECO:0007669"/>
    <property type="project" value="UniProtKB-UniRule"/>
</dbReference>
<dbReference type="CDD" id="cd04728">
    <property type="entry name" value="ThiG"/>
    <property type="match status" value="1"/>
</dbReference>
<dbReference type="Gene3D" id="3.20.20.70">
    <property type="entry name" value="Aldolase class I"/>
    <property type="match status" value="1"/>
</dbReference>
<dbReference type="HAMAP" id="MF_00443">
    <property type="entry name" value="ThiG"/>
    <property type="match status" value="1"/>
</dbReference>
<dbReference type="InterPro" id="IPR013785">
    <property type="entry name" value="Aldolase_TIM"/>
</dbReference>
<dbReference type="InterPro" id="IPR033983">
    <property type="entry name" value="Thiazole_synthase_ThiG"/>
</dbReference>
<dbReference type="InterPro" id="IPR008867">
    <property type="entry name" value="ThiG"/>
</dbReference>
<dbReference type="PANTHER" id="PTHR34266">
    <property type="entry name" value="THIAZOLE SYNTHASE"/>
    <property type="match status" value="1"/>
</dbReference>
<dbReference type="PANTHER" id="PTHR34266:SF2">
    <property type="entry name" value="THIAZOLE SYNTHASE"/>
    <property type="match status" value="1"/>
</dbReference>
<dbReference type="Pfam" id="PF05690">
    <property type="entry name" value="ThiG"/>
    <property type="match status" value="1"/>
</dbReference>
<dbReference type="SUPFAM" id="SSF110399">
    <property type="entry name" value="ThiG-like"/>
    <property type="match status" value="1"/>
</dbReference>
<accession>A0QQL0</accession>
<accession>I7FX04</accession>
<keyword id="KW-0963">Cytoplasm</keyword>
<keyword id="KW-1185">Reference proteome</keyword>
<keyword id="KW-0704">Schiff base</keyword>
<keyword id="KW-0784">Thiamine biosynthesis</keyword>
<keyword id="KW-0808">Transferase</keyword>
<name>THIG_MYCS2</name>
<sequence>MADSVLRIGGREFGSRLIMGTGGAPNLSVLEEALIASGTELTTVAMRRVDAETGTGVLDLLNRLGIAALPNTAGCRGAAEAVLTAQLAREALGTDMVKLEVIADERTLLPDAVELVKAAEQLVDDGFTVLPYTNDDPVLARRLEDIGCAAVMPLGSPIGTGLGISNPHNIEMIVAAAGVPVVLDAGIGTASDAALAMELGCDAVLLATAVTRASDPPTMAAAMASAVTAGHLARQAGRIPKRFWAQASSPAL</sequence>
<reference key="1">
    <citation type="submission" date="2006-10" db="EMBL/GenBank/DDBJ databases">
        <authorList>
            <person name="Fleischmann R.D."/>
            <person name="Dodson R.J."/>
            <person name="Haft D.H."/>
            <person name="Merkel J.S."/>
            <person name="Nelson W.C."/>
            <person name="Fraser C.M."/>
        </authorList>
    </citation>
    <scope>NUCLEOTIDE SEQUENCE [LARGE SCALE GENOMIC DNA]</scope>
    <source>
        <strain>ATCC 700084 / mc(2)155</strain>
    </source>
</reference>
<reference key="2">
    <citation type="journal article" date="2007" name="Genome Biol.">
        <title>Interrupted coding sequences in Mycobacterium smegmatis: authentic mutations or sequencing errors?</title>
        <authorList>
            <person name="Deshayes C."/>
            <person name="Perrodou E."/>
            <person name="Gallien S."/>
            <person name="Euphrasie D."/>
            <person name="Schaeffer C."/>
            <person name="Van-Dorsselaer A."/>
            <person name="Poch O."/>
            <person name="Lecompte O."/>
            <person name="Reyrat J.-M."/>
        </authorList>
    </citation>
    <scope>NUCLEOTIDE SEQUENCE [LARGE SCALE GENOMIC DNA]</scope>
    <source>
        <strain>ATCC 700084 / mc(2)155</strain>
    </source>
</reference>
<reference key="3">
    <citation type="journal article" date="2009" name="Genome Res.">
        <title>Ortho-proteogenomics: multiple proteomes investigation through orthology and a new MS-based protocol.</title>
        <authorList>
            <person name="Gallien S."/>
            <person name="Perrodou E."/>
            <person name="Carapito C."/>
            <person name="Deshayes C."/>
            <person name="Reyrat J.-M."/>
            <person name="Van Dorsselaer A."/>
            <person name="Poch O."/>
            <person name="Schaeffer C."/>
            <person name="Lecompte O."/>
        </authorList>
    </citation>
    <scope>NUCLEOTIDE SEQUENCE [LARGE SCALE GENOMIC DNA]</scope>
    <scope>IDENTIFICATION BY MASS SPECTROMETRY [LARGE SCALE ANALYSIS]</scope>
    <scope>CLEAVAGE OF INITIATOR METHIONINE</scope>
    <source>
        <strain>ATCC 700084 / mc(2)155</strain>
    </source>
</reference>
<evidence type="ECO:0000255" key="1">
    <source>
        <dbReference type="HAMAP-Rule" id="MF_00443"/>
    </source>
</evidence>
<evidence type="ECO:0000269" key="2">
    <source>
    </source>
</evidence>
<comment type="function">
    <text evidence="1">Catalyzes the rearrangement of 1-deoxy-D-xylulose 5-phosphate (DXP) to produce the thiazole phosphate moiety of thiamine. Sulfur is provided by the thiocarboxylate moiety of the carrier protein ThiS. In vitro, sulfur can be provided by H(2)S.</text>
</comment>
<comment type="catalytic activity">
    <reaction evidence="1">
        <text>[ThiS sulfur-carrier protein]-C-terminal-Gly-aminoethanethioate + 2-iminoacetate + 1-deoxy-D-xylulose 5-phosphate = [ThiS sulfur-carrier protein]-C-terminal Gly-Gly + 2-[(2R,5Z)-2-carboxy-4-methylthiazol-5(2H)-ylidene]ethyl phosphate + 2 H2O + H(+)</text>
        <dbReference type="Rhea" id="RHEA:26297"/>
        <dbReference type="Rhea" id="RHEA-COMP:12909"/>
        <dbReference type="Rhea" id="RHEA-COMP:19908"/>
        <dbReference type="ChEBI" id="CHEBI:15377"/>
        <dbReference type="ChEBI" id="CHEBI:15378"/>
        <dbReference type="ChEBI" id="CHEBI:57792"/>
        <dbReference type="ChEBI" id="CHEBI:62899"/>
        <dbReference type="ChEBI" id="CHEBI:77846"/>
        <dbReference type="ChEBI" id="CHEBI:90778"/>
        <dbReference type="ChEBI" id="CHEBI:232372"/>
        <dbReference type="EC" id="2.8.1.10"/>
    </reaction>
</comment>
<comment type="pathway">
    <text evidence="1">Cofactor biosynthesis; thiamine diphosphate biosynthesis.</text>
</comment>
<comment type="subunit">
    <text evidence="1">Homotetramer. Forms heterodimers with either ThiH or ThiS.</text>
</comment>
<comment type="subcellular location">
    <subcellularLocation>
        <location evidence="1">Cytoplasm</location>
    </subcellularLocation>
</comment>
<comment type="similarity">
    <text evidence="1">Belongs to the ThiG family.</text>
</comment>
<feature type="initiator methionine" description="Removed" evidence="2">
    <location>
        <position position="1"/>
    </location>
</feature>
<feature type="chain" id="PRO_1000026013" description="Thiazole synthase">
    <location>
        <begin position="2"/>
        <end position="252"/>
    </location>
</feature>
<feature type="active site" description="Schiff-base intermediate with DXP" evidence="1">
    <location>
        <position position="98"/>
    </location>
</feature>
<feature type="binding site" evidence="1">
    <location>
        <position position="159"/>
    </location>
    <ligand>
        <name>1-deoxy-D-xylulose 5-phosphate</name>
        <dbReference type="ChEBI" id="CHEBI:57792"/>
    </ligand>
</feature>
<feature type="binding site" evidence="1">
    <location>
        <begin position="185"/>
        <end position="186"/>
    </location>
    <ligand>
        <name>1-deoxy-D-xylulose 5-phosphate</name>
        <dbReference type="ChEBI" id="CHEBI:57792"/>
    </ligand>
</feature>
<feature type="binding site" evidence="1">
    <location>
        <begin position="207"/>
        <end position="208"/>
    </location>
    <ligand>
        <name>1-deoxy-D-xylulose 5-phosphate</name>
        <dbReference type="ChEBI" id="CHEBI:57792"/>
    </ligand>
</feature>